<keyword id="KW-0150">Chloroplast</keyword>
<keyword id="KW-0472">Membrane</keyword>
<keyword id="KW-0934">Plastid</keyword>
<keyword id="KW-0653">Protein transport</keyword>
<keyword id="KW-1185">Reference proteome</keyword>
<keyword id="KW-0793">Thylakoid</keyword>
<keyword id="KW-0809">Transit peptide</keyword>
<keyword id="KW-0811">Translocation</keyword>
<keyword id="KW-0812">Transmembrane</keyword>
<keyword id="KW-1133">Transmembrane helix</keyword>
<keyword id="KW-0813">Transport</keyword>
<dbReference type="EMBL" id="AF027808">
    <property type="protein sequence ID" value="AAC01571.1"/>
    <property type="molecule type" value="mRNA"/>
</dbReference>
<dbReference type="EMBL" id="CM007648">
    <property type="protein sequence ID" value="ONM17954.1"/>
    <property type="status" value="ALT_SEQ"/>
    <property type="molecule type" value="Genomic_DNA"/>
</dbReference>
<dbReference type="EMBL" id="BT068439">
    <property type="protein sequence ID" value="ACN35336.1"/>
    <property type="molecule type" value="mRNA"/>
</dbReference>
<dbReference type="PIR" id="T01297">
    <property type="entry name" value="T01297"/>
</dbReference>
<dbReference type="RefSeq" id="NP_001105878.1">
    <property type="nucleotide sequence ID" value="NM_001112408.1"/>
</dbReference>
<dbReference type="FunCoup" id="O48950">
    <property type="interactions" value="1"/>
</dbReference>
<dbReference type="IntAct" id="O48950">
    <property type="interactions" value="1"/>
</dbReference>
<dbReference type="STRING" id="4577.O48950"/>
<dbReference type="PaxDb" id="4577-GRMZM5G898735_P02"/>
<dbReference type="EnsemblPlants" id="Zm00001eb085050_T002">
    <property type="protein sequence ID" value="Zm00001eb085050_P002"/>
    <property type="gene ID" value="Zm00001eb085050"/>
</dbReference>
<dbReference type="GeneID" id="732790"/>
<dbReference type="Gramene" id="Zm00001eb085050_T002">
    <property type="protein sequence ID" value="Zm00001eb085050_P002"/>
    <property type="gene ID" value="Zm00001eb085050"/>
</dbReference>
<dbReference type="KEGG" id="zma:732790"/>
<dbReference type="MaizeGDB" id="47580"/>
<dbReference type="eggNOG" id="ENOG502QSWH">
    <property type="taxonomic scope" value="Eukaryota"/>
</dbReference>
<dbReference type="HOGENOM" id="CLU_072198_0_0_1"/>
<dbReference type="InParanoid" id="O48950"/>
<dbReference type="OrthoDB" id="2017985at2759"/>
<dbReference type="Proteomes" id="UP000007305">
    <property type="component" value="Chromosome 2"/>
</dbReference>
<dbReference type="ExpressionAtlas" id="O48950">
    <property type="expression patterns" value="baseline and differential"/>
</dbReference>
<dbReference type="GO" id="GO:0009535">
    <property type="term" value="C:chloroplast thylakoid membrane"/>
    <property type="evidence" value="ECO:0000314"/>
    <property type="project" value="UniProtKB"/>
</dbReference>
<dbReference type="GO" id="GO:0009977">
    <property type="term" value="F:proton motive force dependent protein transmembrane transporter activity"/>
    <property type="evidence" value="ECO:0000314"/>
    <property type="project" value="UniProtKB"/>
</dbReference>
<dbReference type="GO" id="GO:0045038">
    <property type="term" value="P:protein import into chloroplast thylakoid membrane"/>
    <property type="evidence" value="ECO:0000314"/>
    <property type="project" value="UniProtKB"/>
</dbReference>
<dbReference type="GO" id="GO:0043953">
    <property type="term" value="P:protein transport by the Tat complex"/>
    <property type="evidence" value="ECO:0000314"/>
    <property type="project" value="UniProtKB"/>
</dbReference>
<dbReference type="FunFam" id="1.20.5.3310:FF:000003">
    <property type="entry name" value="Sec-independent protein translocase protein TATB, chloroplastic"/>
    <property type="match status" value="1"/>
</dbReference>
<dbReference type="Gene3D" id="1.20.5.3310">
    <property type="match status" value="1"/>
</dbReference>
<dbReference type="InterPro" id="IPR003369">
    <property type="entry name" value="TatA/B/E"/>
</dbReference>
<dbReference type="InterPro" id="IPR006312">
    <property type="entry name" value="TatA/E"/>
</dbReference>
<dbReference type="NCBIfam" id="TIGR01411">
    <property type="entry name" value="tatAE"/>
    <property type="match status" value="1"/>
</dbReference>
<dbReference type="PANTHER" id="PTHR33162">
    <property type="entry name" value="SEC-INDEPENDENT PROTEIN TRANSLOCASE PROTEIN TATA, CHLOROPLASTIC"/>
    <property type="match status" value="1"/>
</dbReference>
<dbReference type="PANTHER" id="PTHR33162:SF3">
    <property type="entry name" value="SEC-INDEPENDENT PROTEIN TRANSLOCASE PROTEIN TATB, CHLOROPLASTIC"/>
    <property type="match status" value="1"/>
</dbReference>
<dbReference type="Pfam" id="PF02416">
    <property type="entry name" value="TatA_B_E"/>
    <property type="match status" value="1"/>
</dbReference>
<dbReference type="PRINTS" id="PR01506">
    <property type="entry name" value="TATBPROTEIN"/>
</dbReference>
<protein>
    <recommendedName>
        <fullName evidence="9">Sec-independent protein translocase protein TATB, chloroplastic</fullName>
    </recommendedName>
    <alternativeName>
        <fullName evidence="8">Protein HIGH CHLOROPHYLL FLUORESCENCE 106</fullName>
    </alternativeName>
    <alternativeName>
        <fullName evidence="9">Protein TWIN-ARGININE TRANSLOCATION B</fullName>
    </alternativeName>
</protein>
<accession>O48950</accession>
<accession>A0A1D6ECA8</accession>
<evidence type="ECO:0000250" key="1"/>
<evidence type="ECO:0000255" key="2"/>
<evidence type="ECO:0000256" key="3">
    <source>
        <dbReference type="SAM" id="MobiDB-lite"/>
    </source>
</evidence>
<evidence type="ECO:0000269" key="4">
    <source>
    </source>
</evidence>
<evidence type="ECO:0000269" key="5">
    <source>
    </source>
</evidence>
<evidence type="ECO:0000269" key="6">
    <source>
    </source>
</evidence>
<evidence type="ECO:0000269" key="7">
    <source>
    </source>
</evidence>
<evidence type="ECO:0000303" key="8">
    <source>
    </source>
</evidence>
<evidence type="ECO:0000305" key="9"/>
<evidence type="ECO:0000305" key="10">
    <source>
    </source>
</evidence>
<evidence type="ECO:0000305" key="11">
    <source>
    </source>
</evidence>
<evidence type="ECO:0000312" key="12">
    <source>
        <dbReference type="EMBL" id="ONM17954.1"/>
    </source>
</evidence>
<feature type="transit peptide" description="Chloroplast" evidence="2">
    <location>
        <begin position="1"/>
        <end position="67"/>
    </location>
</feature>
<feature type="chain" id="PRO_0000419916" description="Sec-independent protein translocase protein TATB, chloroplastic">
    <location>
        <begin position="68"/>
        <end position="243"/>
    </location>
</feature>
<feature type="topological domain" description="Lumenal" evidence="2">
    <location>
        <begin position="68"/>
        <end position="69"/>
    </location>
</feature>
<feature type="transmembrane region" description="Helical" evidence="2">
    <location>
        <begin position="70"/>
        <end position="90"/>
    </location>
</feature>
<feature type="topological domain" description="Stromal" evidence="2">
    <location>
        <begin position="91"/>
        <end position="243"/>
    </location>
</feature>
<feature type="region of interest" description="Disordered" evidence="3">
    <location>
        <begin position="129"/>
        <end position="165"/>
    </location>
</feature>
<feature type="region of interest" description="Disordered" evidence="3">
    <location>
        <begin position="178"/>
        <end position="243"/>
    </location>
</feature>
<feature type="compositionally biased region" description="Polar residues" evidence="3">
    <location>
        <begin position="135"/>
        <end position="152"/>
    </location>
</feature>
<feature type="compositionally biased region" description="Polar residues" evidence="3">
    <location>
        <begin position="187"/>
        <end position="204"/>
    </location>
</feature>
<proteinExistence type="evidence at protein level"/>
<gene>
    <name evidence="10" type="primary">TATB</name>
    <name evidence="8" type="synonym">HCF106</name>
    <name evidence="12" type="ORF">ZEAMMB73_Zm00001d003913</name>
</gene>
<comment type="function">
    <text evidence="4 5 7">Part of the twin-arginine translocation (Tat) system that transports large folded proteins containing a characteristic twin-arginine motif in their signal peptide across the thylakoid membrane. Involved in delta pH-dependent protein transport required for chloroplast development, especially thylakoid membrane formation. TATC and TATB mediate precursor recognition, whereas TATA facilitates translocation.</text>
</comment>
<comment type="subunit">
    <text evidence="1">In thylakoid membranes, TATC and TATB form a large receptor complex, containing about eight TATC-TATB pairs, which binds the precursor protein. Twin arginine signal peptide promotes pH-triggered docking of TATA oligomers to TATC-TATB receptor complex, inducing a conformational switch of TATA that results in activation of the translocase. TATA dissociates from TATC-TATB upon completion of translocation (By similarity).</text>
</comment>
<comment type="subcellular location">
    <subcellularLocation>
        <location evidence="11">Plastid</location>
        <location evidence="11">Chloroplast thylakoid membrane</location>
        <topology evidence="11">Single-pass membrane protein</topology>
    </subcellularLocation>
    <text>The C-terminus is located in the stroma.</text>
</comment>
<comment type="disruption phenotype">
    <text evidence="6 7">Seedling lethality. Non-photosynthetic mutants possess near normal pigment levels but lack one or more elements of the electron transport activity in chloroplasts. Defects in protein targeting across chloroplast thylakoid membrane (PubMed:7664731).</text>
</comment>
<comment type="similarity">
    <text evidence="9">Belongs to the TatB family.</text>
</comment>
<comment type="sequence caution" evidence="9">
    <conflict type="erroneous gene model prediction">
        <sequence resource="EMBL-CDS" id="ONM17954"/>
    </conflict>
</comment>
<reference key="1">
    <citation type="journal article" date="1997" name="Science">
        <title>Sec-independent protein translocation by the maize Hcf106 protein.</title>
        <authorList>
            <person name="Settles A.M."/>
            <person name="Yonetani A."/>
            <person name="Baron A."/>
            <person name="Bush D.R."/>
            <person name="Cline K."/>
            <person name="Martienssen R."/>
        </authorList>
    </citation>
    <scope>NUCLEOTIDE SEQUENCE [MRNA]</scope>
    <scope>FUNCTION</scope>
    <scope>SUBCELLULAR LOCATION</scope>
    <scope>TOPOLOGY</scope>
    <scope>DISRUPTION PHENOTYPE</scope>
    <source>
        <strain>cv. B73</strain>
        <tissue>Seedling leaf</tissue>
    </source>
</reference>
<reference key="2">
    <citation type="journal article" date="2009" name="Science">
        <title>The B73 maize genome: complexity, diversity, and dynamics.</title>
        <authorList>
            <person name="Schnable P.S."/>
            <person name="Ware D."/>
            <person name="Fulton R.S."/>
            <person name="Stein J.C."/>
            <person name="Wei F."/>
            <person name="Pasternak S."/>
            <person name="Liang C."/>
            <person name="Zhang J."/>
            <person name="Fulton L."/>
            <person name="Graves T.A."/>
            <person name="Minx P."/>
            <person name="Reily A.D."/>
            <person name="Courtney L."/>
            <person name="Kruchowski S.S."/>
            <person name="Tomlinson C."/>
            <person name="Strong C."/>
            <person name="Delehaunty K."/>
            <person name="Fronick C."/>
            <person name="Courtney B."/>
            <person name="Rock S.M."/>
            <person name="Belter E."/>
            <person name="Du F."/>
            <person name="Kim K."/>
            <person name="Abbott R.M."/>
            <person name="Cotton M."/>
            <person name="Levy A."/>
            <person name="Marchetto P."/>
            <person name="Ochoa K."/>
            <person name="Jackson S.M."/>
            <person name="Gillam B."/>
            <person name="Chen W."/>
            <person name="Yan L."/>
            <person name="Higginbotham J."/>
            <person name="Cardenas M."/>
            <person name="Waligorski J."/>
            <person name="Applebaum E."/>
            <person name="Phelps L."/>
            <person name="Falcone J."/>
            <person name="Kanchi K."/>
            <person name="Thane T."/>
            <person name="Scimone A."/>
            <person name="Thane N."/>
            <person name="Henke J."/>
            <person name="Wang T."/>
            <person name="Ruppert J."/>
            <person name="Shah N."/>
            <person name="Rotter K."/>
            <person name="Hodges J."/>
            <person name="Ingenthron E."/>
            <person name="Cordes M."/>
            <person name="Kohlberg S."/>
            <person name="Sgro J."/>
            <person name="Delgado B."/>
            <person name="Mead K."/>
            <person name="Chinwalla A."/>
            <person name="Leonard S."/>
            <person name="Crouse K."/>
            <person name="Collura K."/>
            <person name="Kudrna D."/>
            <person name="Currie J."/>
            <person name="He R."/>
            <person name="Angelova A."/>
            <person name="Rajasekar S."/>
            <person name="Mueller T."/>
            <person name="Lomeli R."/>
            <person name="Scara G."/>
            <person name="Ko A."/>
            <person name="Delaney K."/>
            <person name="Wissotski M."/>
            <person name="Lopez G."/>
            <person name="Campos D."/>
            <person name="Braidotti M."/>
            <person name="Ashley E."/>
            <person name="Golser W."/>
            <person name="Kim H."/>
            <person name="Lee S."/>
            <person name="Lin J."/>
            <person name="Dujmic Z."/>
            <person name="Kim W."/>
            <person name="Talag J."/>
            <person name="Zuccolo A."/>
            <person name="Fan C."/>
            <person name="Sebastian A."/>
            <person name="Kramer M."/>
            <person name="Spiegel L."/>
            <person name="Nascimento L."/>
            <person name="Zutavern T."/>
            <person name="Miller B."/>
            <person name="Ambroise C."/>
            <person name="Muller S."/>
            <person name="Spooner W."/>
            <person name="Narechania A."/>
            <person name="Ren L."/>
            <person name="Wei S."/>
            <person name="Kumari S."/>
            <person name="Faga B."/>
            <person name="Levy M.J."/>
            <person name="McMahan L."/>
            <person name="Van Buren P."/>
            <person name="Vaughn M.W."/>
            <person name="Ying K."/>
            <person name="Yeh C.-T."/>
            <person name="Emrich S.J."/>
            <person name="Jia Y."/>
            <person name="Kalyanaraman A."/>
            <person name="Hsia A.-P."/>
            <person name="Barbazuk W.B."/>
            <person name="Baucom R.S."/>
            <person name="Brutnell T.P."/>
            <person name="Carpita N.C."/>
            <person name="Chaparro C."/>
            <person name="Chia J.-M."/>
            <person name="Deragon J.-M."/>
            <person name="Estill J.C."/>
            <person name="Fu Y."/>
            <person name="Jeddeloh J.A."/>
            <person name="Han Y."/>
            <person name="Lee H."/>
            <person name="Li P."/>
            <person name="Lisch D.R."/>
            <person name="Liu S."/>
            <person name="Liu Z."/>
            <person name="Nagel D.H."/>
            <person name="McCann M.C."/>
            <person name="SanMiguel P."/>
            <person name="Myers A.M."/>
            <person name="Nettleton D."/>
            <person name="Nguyen J."/>
            <person name="Penning B.W."/>
            <person name="Ponnala L."/>
            <person name="Schneider K.L."/>
            <person name="Schwartz D.C."/>
            <person name="Sharma A."/>
            <person name="Soderlund C."/>
            <person name="Springer N.M."/>
            <person name="Sun Q."/>
            <person name="Wang H."/>
            <person name="Waterman M."/>
            <person name="Westerman R."/>
            <person name="Wolfgruber T.K."/>
            <person name="Yang L."/>
            <person name="Yu Y."/>
            <person name="Zhang L."/>
            <person name="Zhou S."/>
            <person name="Zhu Q."/>
            <person name="Bennetzen J.L."/>
            <person name="Dawe R.K."/>
            <person name="Jiang J."/>
            <person name="Jiang N."/>
            <person name="Presting G.G."/>
            <person name="Wessler S.R."/>
            <person name="Aluru S."/>
            <person name="Martienssen R.A."/>
            <person name="Clifton S.W."/>
            <person name="McCombie W.R."/>
            <person name="Wing R.A."/>
            <person name="Wilson R.K."/>
        </authorList>
    </citation>
    <scope>NUCLEOTIDE SEQUENCE [LARGE SCALE GENOMIC DNA]</scope>
    <source>
        <strain>cv. B73</strain>
    </source>
</reference>
<reference key="3">
    <citation type="journal article" date="2009" name="PLoS Genet.">
        <title>Sequencing, mapping, and analysis of 27,455 maize full-length cDNAs.</title>
        <authorList>
            <person name="Soderlund C."/>
            <person name="Descour A."/>
            <person name="Kudrna D."/>
            <person name="Bomhoff M."/>
            <person name="Boyd L."/>
            <person name="Currie J."/>
            <person name="Angelova A."/>
            <person name="Collura K."/>
            <person name="Wissotski M."/>
            <person name="Ashley E."/>
            <person name="Morrow D."/>
            <person name="Fernandes J."/>
            <person name="Walbot V."/>
            <person name="Yu Y."/>
        </authorList>
    </citation>
    <scope>NUCLEOTIDE SEQUENCE [LARGE SCALE MRNA]</scope>
    <source>
        <strain>cv. B73</strain>
    </source>
</reference>
<reference key="4">
    <citation type="journal article" date="1995" name="EMBO J.">
        <title>Two nuclear mutations disrupt distinct pathways for targeting proteins to the chloroplast thylakoid.</title>
        <authorList>
            <person name="Voelker R."/>
            <person name="Barkan A."/>
        </authorList>
    </citation>
    <scope>DISRUPTION PHENOTYPE</scope>
</reference>
<reference key="5">
    <citation type="journal article" date="1999" name="J. Cell Biol.">
        <title>Component specificity for the thylakoidal Sec and Delta pH-dependent protein transport pathways.</title>
        <authorList>
            <person name="Mori M."/>
            <person name="Summer E.J."/>
            <person name="Ma X."/>
            <person name="Cline K."/>
        </authorList>
    </citation>
    <scope>FUNCTION</scope>
</reference>
<reference key="6">
    <citation type="journal article" date="2000" name="J. Biol. Chem.">
        <title>The thylakoid delta pH-dependent pathway machinery facilitates RR-independent N-tail protein integration.</title>
        <authorList>
            <person name="Summer E.J."/>
            <person name="Mori H."/>
            <person name="Settles A.M."/>
            <person name="Cline K."/>
        </authorList>
    </citation>
    <scope>FUNCTION</scope>
</reference>
<sequence length="243" mass="26326">MTPTANLLLPAPPFVPISDVRRLQLPPRVRHQPRPCWKGVEWGSIQTRMVSSFVAVGSRTRRRNVICASLFGVGAPEALVIGVVALLVFGPKGLAEVARNLGKTLRAFQPTIRELQDVSREFRSTLEREIGIDEVSQSTNYRPTTMNNNQQPAADPNVKPEPAPYTSEELMKVTEEQIAASAAAAWNPQQPATSQQQEEAPTTPRSEDAPTSGGSDGPAAPARAVSDSDPNQVNKSQKAEGER</sequence>
<name>TATB_MAIZE</name>
<organism>
    <name type="scientific">Zea mays</name>
    <name type="common">Maize</name>
    <dbReference type="NCBI Taxonomy" id="4577"/>
    <lineage>
        <taxon>Eukaryota</taxon>
        <taxon>Viridiplantae</taxon>
        <taxon>Streptophyta</taxon>
        <taxon>Embryophyta</taxon>
        <taxon>Tracheophyta</taxon>
        <taxon>Spermatophyta</taxon>
        <taxon>Magnoliopsida</taxon>
        <taxon>Liliopsida</taxon>
        <taxon>Poales</taxon>
        <taxon>Poaceae</taxon>
        <taxon>PACMAD clade</taxon>
        <taxon>Panicoideae</taxon>
        <taxon>Andropogonodae</taxon>
        <taxon>Andropogoneae</taxon>
        <taxon>Tripsacinae</taxon>
        <taxon>Zea</taxon>
    </lineage>
</organism>